<keyword id="KW-0067">ATP-binding</keyword>
<keyword id="KW-0158">Chromosome</keyword>
<keyword id="KW-0547">Nucleotide-binding</keyword>
<keyword id="KW-0539">Nucleus</keyword>
<keyword id="KW-1185">Reference proteome</keyword>
<keyword id="KW-0677">Repeat</keyword>
<keyword id="KW-0687">Ribonucleoprotein</keyword>
<keyword id="KW-0694">RNA-binding</keyword>
<keyword id="KW-0779">Telomere</keyword>
<keyword id="KW-0853">WD repeat</keyword>
<dbReference type="EMBL" id="U86137">
    <property type="protein sequence ID" value="AAC53043.1"/>
    <property type="molecule type" value="mRNA"/>
</dbReference>
<dbReference type="CCDS" id="CCDS36907.1"/>
<dbReference type="PIR" id="T30987">
    <property type="entry name" value="T30987"/>
</dbReference>
<dbReference type="RefSeq" id="NP_033377.1">
    <property type="nucleotide sequence ID" value="NM_009351.2"/>
</dbReference>
<dbReference type="BioGRID" id="204114">
    <property type="interactions" value="2"/>
</dbReference>
<dbReference type="FunCoup" id="P97499">
    <property type="interactions" value="193"/>
</dbReference>
<dbReference type="STRING" id="10090.ENSMUSP00000006444"/>
<dbReference type="GlyGen" id="P97499">
    <property type="glycosylation" value="1 site, 1 O-linked glycan (1 site)"/>
</dbReference>
<dbReference type="iPTMnet" id="P97499"/>
<dbReference type="PhosphoSitePlus" id="P97499"/>
<dbReference type="jPOST" id="P97499"/>
<dbReference type="PaxDb" id="10090-ENSMUSP00000006444"/>
<dbReference type="PeptideAtlas" id="P97499"/>
<dbReference type="ProteomicsDB" id="263278"/>
<dbReference type="Pumba" id="P97499"/>
<dbReference type="Antibodypedia" id="6875">
    <property type="antibodies" value="99 antibodies from 28 providers"/>
</dbReference>
<dbReference type="DNASU" id="21745"/>
<dbReference type="Ensembl" id="ENSMUST00000006444.9">
    <property type="protein sequence ID" value="ENSMUSP00000006444.8"/>
    <property type="gene ID" value="ENSMUSG00000006281.9"/>
</dbReference>
<dbReference type="GeneID" id="21745"/>
<dbReference type="KEGG" id="mmu:21745"/>
<dbReference type="UCSC" id="uc007tlt.1">
    <property type="organism name" value="mouse"/>
</dbReference>
<dbReference type="AGR" id="MGI:109573"/>
<dbReference type="CTD" id="7011"/>
<dbReference type="MGI" id="MGI:109573">
    <property type="gene designation" value="Tep1"/>
</dbReference>
<dbReference type="VEuPathDB" id="HostDB:ENSMUSG00000006281"/>
<dbReference type="eggNOG" id="KOG3602">
    <property type="taxonomic scope" value="Eukaryota"/>
</dbReference>
<dbReference type="eggNOG" id="KOG4155">
    <property type="taxonomic scope" value="Eukaryota"/>
</dbReference>
<dbReference type="GeneTree" id="ENSGT00940000161338"/>
<dbReference type="HOGENOM" id="CLU_000342_0_0_1"/>
<dbReference type="InParanoid" id="P97499"/>
<dbReference type="OMA" id="WQILPKG"/>
<dbReference type="OrthoDB" id="427368at2759"/>
<dbReference type="PhylomeDB" id="P97499"/>
<dbReference type="TreeFam" id="TF328424"/>
<dbReference type="BioGRID-ORCS" id="21745">
    <property type="hits" value="2 hits in 77 CRISPR screens"/>
</dbReference>
<dbReference type="ChiTaRS" id="Tep1">
    <property type="organism name" value="mouse"/>
</dbReference>
<dbReference type="PRO" id="PR:P97499"/>
<dbReference type="Proteomes" id="UP000000589">
    <property type="component" value="Chromosome 14"/>
</dbReference>
<dbReference type="RNAct" id="P97499">
    <property type="molecule type" value="protein"/>
</dbReference>
<dbReference type="Bgee" id="ENSMUSG00000006281">
    <property type="expression patterns" value="Expressed in duodenum and 193 other cell types or tissues"/>
</dbReference>
<dbReference type="ExpressionAtlas" id="P97499">
    <property type="expression patterns" value="baseline and differential"/>
</dbReference>
<dbReference type="GO" id="GO:0000781">
    <property type="term" value="C:chromosome, telomeric region"/>
    <property type="evidence" value="ECO:0007669"/>
    <property type="project" value="UniProtKB-SubCell"/>
</dbReference>
<dbReference type="GO" id="GO:0005737">
    <property type="term" value="C:cytoplasm"/>
    <property type="evidence" value="ECO:0000266"/>
    <property type="project" value="MGI"/>
</dbReference>
<dbReference type="GO" id="GO:0016363">
    <property type="term" value="C:nuclear matrix"/>
    <property type="evidence" value="ECO:0000266"/>
    <property type="project" value="MGI"/>
</dbReference>
<dbReference type="GO" id="GO:0005697">
    <property type="term" value="C:telomerase holoenzyme complex"/>
    <property type="evidence" value="ECO:0000314"/>
    <property type="project" value="BHF-UCL"/>
</dbReference>
<dbReference type="GO" id="GO:0005524">
    <property type="term" value="F:ATP binding"/>
    <property type="evidence" value="ECO:0007669"/>
    <property type="project" value="UniProtKB-KW"/>
</dbReference>
<dbReference type="GO" id="GO:0019899">
    <property type="term" value="F:enzyme binding"/>
    <property type="evidence" value="ECO:0007669"/>
    <property type="project" value="Ensembl"/>
</dbReference>
<dbReference type="GO" id="GO:0002039">
    <property type="term" value="F:p53 binding"/>
    <property type="evidence" value="ECO:0007669"/>
    <property type="project" value="Ensembl"/>
</dbReference>
<dbReference type="GO" id="GO:0003723">
    <property type="term" value="F:RNA binding"/>
    <property type="evidence" value="ECO:0000315"/>
    <property type="project" value="UniProtKB"/>
</dbReference>
<dbReference type="GO" id="GO:0003720">
    <property type="term" value="F:telomerase activity"/>
    <property type="evidence" value="ECO:0007669"/>
    <property type="project" value="Ensembl"/>
</dbReference>
<dbReference type="GO" id="GO:0070034">
    <property type="term" value="F:telomerase RNA binding"/>
    <property type="evidence" value="ECO:0000314"/>
    <property type="project" value="BHF-UCL"/>
</dbReference>
<dbReference type="GO" id="GO:0000722">
    <property type="term" value="P:telomere maintenance via recombination"/>
    <property type="evidence" value="ECO:0007669"/>
    <property type="project" value="Ensembl"/>
</dbReference>
<dbReference type="CDD" id="cd00200">
    <property type="entry name" value="WD40"/>
    <property type="match status" value="2"/>
</dbReference>
<dbReference type="FunFam" id="1.25.40.370:FF:000002">
    <property type="entry name" value="Telomerase associated protein 1"/>
    <property type="match status" value="1"/>
</dbReference>
<dbReference type="FunFam" id="2.130.10.10:FF:000636">
    <property type="entry name" value="Telomerase protein component 1"/>
    <property type="match status" value="1"/>
</dbReference>
<dbReference type="FunFam" id="2.130.10.10:FF:002153">
    <property type="entry name" value="Telomerase protein component 1"/>
    <property type="match status" value="1"/>
</dbReference>
<dbReference type="Gene3D" id="1.25.40.370">
    <property type="match status" value="1"/>
</dbReference>
<dbReference type="Gene3D" id="3.40.50.300">
    <property type="entry name" value="P-loop containing nucleotide triphosphate hydrolases"/>
    <property type="match status" value="1"/>
</dbReference>
<dbReference type="Gene3D" id="2.130.10.10">
    <property type="entry name" value="YVTN repeat-like/Quinoprotein amine dehydrogenase"/>
    <property type="match status" value="6"/>
</dbReference>
<dbReference type="InterPro" id="IPR056829">
    <property type="entry name" value="Beta-prop_TEP1_2nd"/>
</dbReference>
<dbReference type="InterPro" id="IPR056828">
    <property type="entry name" value="Beta-prop_TEP1_C"/>
</dbReference>
<dbReference type="InterPro" id="IPR025139">
    <property type="entry name" value="DUF4062"/>
</dbReference>
<dbReference type="InterPro" id="IPR045804">
    <property type="entry name" value="DUF5920"/>
</dbReference>
<dbReference type="InterPro" id="IPR007111">
    <property type="entry name" value="NACHT_NTPase"/>
</dbReference>
<dbReference type="InterPro" id="IPR027417">
    <property type="entry name" value="P-loop_NTPase"/>
</dbReference>
<dbReference type="InterPro" id="IPR052652">
    <property type="entry name" value="Telomerase_Complex_Comp"/>
</dbReference>
<dbReference type="InterPro" id="IPR008850">
    <property type="entry name" value="TEP1_N"/>
</dbReference>
<dbReference type="InterPro" id="IPR008858">
    <property type="entry name" value="TROVE_dom"/>
</dbReference>
<dbReference type="InterPro" id="IPR037214">
    <property type="entry name" value="TROVE_dom_sf"/>
</dbReference>
<dbReference type="InterPro" id="IPR015943">
    <property type="entry name" value="WD40/YVTN_repeat-like_dom_sf"/>
</dbReference>
<dbReference type="InterPro" id="IPR036322">
    <property type="entry name" value="WD40_repeat_dom_sf"/>
</dbReference>
<dbReference type="InterPro" id="IPR001680">
    <property type="entry name" value="WD40_rpt"/>
</dbReference>
<dbReference type="PANTHER" id="PTHR44791:SF1">
    <property type="entry name" value="TELOMERASE PROTEIN COMPONENT 1"/>
    <property type="match status" value="1"/>
</dbReference>
<dbReference type="PANTHER" id="PTHR44791">
    <property type="entry name" value="TELOMERASE PROTEIN COMPONENT 1 TEP1"/>
    <property type="match status" value="1"/>
</dbReference>
<dbReference type="Pfam" id="PF25047">
    <property type="entry name" value="Beta-prop_TEP1_2nd"/>
    <property type="match status" value="1"/>
</dbReference>
<dbReference type="Pfam" id="PF25048">
    <property type="entry name" value="Beta-prop_TEP1_C"/>
    <property type="match status" value="1"/>
</dbReference>
<dbReference type="Pfam" id="PF13271">
    <property type="entry name" value="DUF4062"/>
    <property type="match status" value="1"/>
</dbReference>
<dbReference type="Pfam" id="PF19334">
    <property type="entry name" value="DUF5920"/>
    <property type="match status" value="1"/>
</dbReference>
<dbReference type="Pfam" id="PF05729">
    <property type="entry name" value="NACHT"/>
    <property type="match status" value="1"/>
</dbReference>
<dbReference type="Pfam" id="PF05386">
    <property type="entry name" value="TEP1_N"/>
    <property type="match status" value="4"/>
</dbReference>
<dbReference type="Pfam" id="PF05731">
    <property type="entry name" value="TROVE"/>
    <property type="match status" value="1"/>
</dbReference>
<dbReference type="Pfam" id="PF00400">
    <property type="entry name" value="WD40"/>
    <property type="match status" value="5"/>
</dbReference>
<dbReference type="SMART" id="SM00320">
    <property type="entry name" value="WD40"/>
    <property type="match status" value="16"/>
</dbReference>
<dbReference type="SUPFAM" id="SSF52540">
    <property type="entry name" value="P-loop containing nucleoside triphosphate hydrolases"/>
    <property type="match status" value="1"/>
</dbReference>
<dbReference type="SUPFAM" id="SSF140864">
    <property type="entry name" value="TROVE domain-like"/>
    <property type="match status" value="1"/>
</dbReference>
<dbReference type="SUPFAM" id="SSF50978">
    <property type="entry name" value="WD40 repeat-like"/>
    <property type="match status" value="4"/>
</dbReference>
<dbReference type="PROSITE" id="PS50837">
    <property type="entry name" value="NACHT"/>
    <property type="match status" value="1"/>
</dbReference>
<dbReference type="PROSITE" id="PS51226">
    <property type="entry name" value="TEP1_N"/>
    <property type="match status" value="4"/>
</dbReference>
<dbReference type="PROSITE" id="PS50988">
    <property type="entry name" value="TROVE"/>
    <property type="match status" value="1"/>
</dbReference>
<dbReference type="PROSITE" id="PS00678">
    <property type="entry name" value="WD_REPEATS_1"/>
    <property type="match status" value="1"/>
</dbReference>
<dbReference type="PROSITE" id="PS50082">
    <property type="entry name" value="WD_REPEATS_2"/>
    <property type="match status" value="8"/>
</dbReference>
<dbReference type="PROSITE" id="PS50294">
    <property type="entry name" value="WD_REPEATS_REGION"/>
    <property type="match status" value="2"/>
</dbReference>
<accession>P97499</accession>
<protein>
    <recommendedName>
        <fullName>Telomerase protein component 1</fullName>
    </recommendedName>
    <alternativeName>
        <fullName>Telomerase-associated protein 1</fullName>
        <shortName>Telomerase protein 1</shortName>
    </alternativeName>
    <alternativeName>
        <fullName>p240</fullName>
    </alternativeName>
    <alternativeName>
        <fullName>p80 telomerase homolog</fullName>
    </alternativeName>
</protein>
<feature type="chain" id="PRO_0000050983" description="Telomerase protein component 1">
    <location>
        <begin position="1"/>
        <end position="2629"/>
    </location>
</feature>
<feature type="repeat" description="TEP1 N-terminal 1">
    <location>
        <begin position="1"/>
        <end position="30"/>
    </location>
</feature>
<feature type="repeat" description="TEP1 N-terminal 2">
    <location>
        <begin position="31"/>
        <end position="60"/>
    </location>
</feature>
<feature type="repeat" description="TEP1 N-terminal 3">
    <location>
        <begin position="61"/>
        <end position="90"/>
    </location>
</feature>
<feature type="repeat" description="TEP1 N-terminal 4">
    <location>
        <begin position="91"/>
        <end position="120"/>
    </location>
</feature>
<feature type="domain" description="TROVE" evidence="3">
    <location>
        <begin position="227"/>
        <end position="685"/>
    </location>
</feature>
<feature type="domain" description="NACHT" evidence="2">
    <location>
        <begin position="1171"/>
        <end position="1578"/>
    </location>
</feature>
<feature type="repeat" description="WD 1">
    <location>
        <begin position="1420"/>
        <end position="1462"/>
    </location>
</feature>
<feature type="repeat" description="WD 2">
    <location>
        <begin position="1681"/>
        <end position="1720"/>
    </location>
</feature>
<feature type="repeat" description="WD 3">
    <location>
        <begin position="1723"/>
        <end position="1761"/>
    </location>
</feature>
<feature type="repeat" description="WD 4">
    <location>
        <begin position="1764"/>
        <end position="1803"/>
    </location>
</feature>
<feature type="repeat" description="WD 5">
    <location>
        <begin position="1805"/>
        <end position="1844"/>
    </location>
</feature>
<feature type="repeat" description="WD 6">
    <location>
        <begin position="1847"/>
        <end position="1886"/>
    </location>
</feature>
<feature type="repeat" description="WD 7">
    <location>
        <begin position="1889"/>
        <end position="1930"/>
    </location>
</feature>
<feature type="repeat" description="WD 8">
    <location>
        <begin position="1932"/>
        <end position="1971"/>
    </location>
</feature>
<feature type="repeat" description="WD 9">
    <location>
        <begin position="1974"/>
        <end position="2013"/>
    </location>
</feature>
<feature type="repeat" description="WD 10">
    <location>
        <begin position="2015"/>
        <end position="2054"/>
    </location>
</feature>
<feature type="repeat" description="WD 11">
    <location>
        <begin position="2067"/>
        <end position="2106"/>
    </location>
</feature>
<feature type="repeat" description="WD 12">
    <location>
        <begin position="2113"/>
        <end position="2151"/>
    </location>
</feature>
<feature type="repeat" description="WD 13">
    <location>
        <begin position="2154"/>
        <end position="2191"/>
    </location>
</feature>
<feature type="repeat" description="WD 14">
    <location>
        <begin position="2193"/>
        <end position="2241"/>
    </location>
</feature>
<feature type="repeat" description="WD 15">
    <location>
        <begin position="2244"/>
        <end position="2282"/>
    </location>
</feature>
<feature type="repeat" description="WD 16">
    <location>
        <begin position="2285"/>
        <end position="2324"/>
    </location>
</feature>
<feature type="repeat" description="WD 17">
    <location>
        <begin position="2326"/>
        <end position="2362"/>
    </location>
</feature>
<feature type="repeat" description="WD 18">
    <location>
        <begin position="2375"/>
        <end position="2424"/>
    </location>
</feature>
<feature type="repeat" description="WD 19">
    <location>
        <begin position="2467"/>
        <end position="2507"/>
    </location>
</feature>
<feature type="repeat" description="WD 20">
    <location>
        <begin position="2555"/>
        <end position="2592"/>
    </location>
</feature>
<feature type="repeat" description="WD 21">
    <location>
        <begin position="2594"/>
        <end position="2628"/>
    </location>
</feature>
<feature type="region of interest" description="Disordered" evidence="4">
    <location>
        <begin position="386"/>
        <end position="412"/>
    </location>
</feature>
<feature type="compositionally biased region" description="Basic residues" evidence="4">
    <location>
        <begin position="386"/>
        <end position="397"/>
    </location>
</feature>
<feature type="compositionally biased region" description="Basic and acidic residues" evidence="4">
    <location>
        <begin position="402"/>
        <end position="412"/>
    </location>
</feature>
<feature type="binding site" evidence="2">
    <location>
        <begin position="1177"/>
        <end position="1184"/>
    </location>
    <ligand>
        <name>ATP</name>
        <dbReference type="ChEBI" id="CHEBI:30616"/>
    </ligand>
</feature>
<evidence type="ECO:0000250" key="1">
    <source>
        <dbReference type="UniProtKB" id="Q99973"/>
    </source>
</evidence>
<evidence type="ECO:0000255" key="2">
    <source>
        <dbReference type="PROSITE-ProRule" id="PRU00136"/>
    </source>
</evidence>
<evidence type="ECO:0000255" key="3">
    <source>
        <dbReference type="PROSITE-ProRule" id="PRU00343"/>
    </source>
</evidence>
<evidence type="ECO:0000256" key="4">
    <source>
        <dbReference type="SAM" id="MobiDB-lite"/>
    </source>
</evidence>
<evidence type="ECO:0000269" key="5">
    <source>
    </source>
</evidence>
<evidence type="ECO:0000269" key="6">
    <source>
    </source>
</evidence>
<evidence type="ECO:0000269" key="7">
    <source>
    </source>
</evidence>
<evidence type="ECO:0000305" key="8"/>
<reference key="1">
    <citation type="journal article" date="1997" name="Science">
        <title>A mammalian telomerase-associated protein.</title>
        <authorList>
            <person name="Harrington L."/>
            <person name="McPhail T."/>
            <person name="Mar V."/>
            <person name="Zhou W."/>
            <person name="Oulton R."/>
            <person name="Bass M.B."/>
            <person name="Arruda I."/>
            <person name="Robinson M.O."/>
        </authorList>
    </citation>
    <scope>NUCLEOTIDE SEQUENCE [MRNA]</scope>
    <scope>TISSUE SPECIFICITY</scope>
    <scope>RNA-BINDING</scope>
    <scope>IDENTIFICATION IN THE TELOMERASE RIBONUCLEOPROTEIN COMPLEX</scope>
</reference>
<reference key="2">
    <citation type="journal article" date="1997" name="Cell">
        <title>TLP1: a gene encoding a protein component of mammalian telomerase is a novel member of WD repeats family.</title>
        <authorList>
            <person name="Nakayama J."/>
            <person name="Saito M."/>
            <person name="Nakamura H."/>
            <person name="Matsuura A."/>
            <person name="Ishikawa F."/>
        </authorList>
    </citation>
    <scope>TISSUE SPECIFICITY</scope>
</reference>
<reference key="3">
    <citation type="journal article" date="1999" name="J. Biol. Chem.">
        <title>Vaults and telomerase share a common subunit, TEP1.</title>
        <authorList>
            <person name="Kickhoefer V.A."/>
            <person name="Stephen A.G."/>
            <person name="Harrington L."/>
            <person name="Robinson M.O."/>
            <person name="Rome L.H."/>
        </authorList>
    </citation>
    <scope>RNA-BINDING</scope>
</reference>
<reference key="4">
    <citation type="journal article" date="2001" name="J. Cell Biol.">
        <title>The telomerase/vault-associated protein TEP1 is required for vault RNA stability and its association with the vault particle.</title>
        <authorList>
            <person name="Kickhoefer V.A."/>
            <person name="Liu Y."/>
            <person name="Kong L.B."/>
            <person name="Snow B.E."/>
            <person name="Stewart P.L."/>
            <person name="Harrington L."/>
            <person name="Rome L.H."/>
        </authorList>
    </citation>
    <scope>FUNCTION IN VAULT RNA LOCALIZATION/STABILIZATION</scope>
    <scope>IDENTIFICATION IN THE VAULTS RIBONUCLEOPROTEIN PARTICLE</scope>
</reference>
<reference key="5">
    <citation type="journal article" date="2010" name="Cell">
        <title>A tissue-specific atlas of mouse protein phosphorylation and expression.</title>
        <authorList>
            <person name="Huttlin E.L."/>
            <person name="Jedrychowski M.P."/>
            <person name="Elias J.E."/>
            <person name="Goswami T."/>
            <person name="Rad R."/>
            <person name="Beausoleil S.A."/>
            <person name="Villen J."/>
            <person name="Haas W."/>
            <person name="Sowa M.E."/>
            <person name="Gygi S.P."/>
        </authorList>
    </citation>
    <scope>IDENTIFICATION BY MASS SPECTROMETRY [LARGE SCALE ANALYSIS]</scope>
    <source>
        <tissue>Brown adipose tissue</tissue>
        <tissue>Liver</tissue>
        <tissue>Lung</tissue>
        <tissue>Pancreas</tissue>
        <tissue>Testis</tissue>
    </source>
</reference>
<organism>
    <name type="scientific">Mus musculus</name>
    <name type="common">Mouse</name>
    <dbReference type="NCBI Taxonomy" id="10090"/>
    <lineage>
        <taxon>Eukaryota</taxon>
        <taxon>Metazoa</taxon>
        <taxon>Chordata</taxon>
        <taxon>Craniata</taxon>
        <taxon>Vertebrata</taxon>
        <taxon>Euteleostomi</taxon>
        <taxon>Mammalia</taxon>
        <taxon>Eutheria</taxon>
        <taxon>Euarchontoglires</taxon>
        <taxon>Glires</taxon>
        <taxon>Rodentia</taxon>
        <taxon>Myomorpha</taxon>
        <taxon>Muroidea</taxon>
        <taxon>Muridae</taxon>
        <taxon>Murinae</taxon>
        <taxon>Mus</taxon>
        <taxon>Mus</taxon>
    </lineage>
</organism>
<name>TEP1_MOUSE</name>
<comment type="function">
    <text evidence="1 5">Component of the telomerase ribonucleoprotein complex that is essential for the replication of chromosome termini (By similarity). Also a component of the ribonucleoprotein vaults particle, a multi-subunit structure involved in nucleo-cytoplasmic transport (PubMed:11149928). Responsible for the localizing and stabilizing vault RNA (vRNA) association in the vault ribonucleoprotein particle (PubMed:11149928).</text>
</comment>
<comment type="subunit">
    <text evidence="1 5 6">Associated component of the telomerase holoenzyme complex (By similarity). Component of the vault ribonucleoprotein particle, at least composed of MVP, PARP4 and one or more vault RNAs (vRNAs) (PubMed:11149928, PubMed:9020079). Binds to VAULTRC1, VAULTRC2 and VAULTRC4/hvg4 vRNAs (PubMed:11149928, PubMed:9020079).</text>
</comment>
<comment type="subcellular location">
    <subcellularLocation>
        <location evidence="8">Nucleus</location>
    </subcellularLocation>
    <subcellularLocation>
        <location>Chromosome</location>
        <location>Telomere</location>
    </subcellularLocation>
</comment>
<comment type="tissue specificity">
    <text evidence="6 7">Ubiquitous.</text>
</comment>
<gene>
    <name type="primary">Tep1</name>
    <name type="synonym">Tp1</name>
</gene>
<sequence length="2629" mass="291460">MEKLCGHVPGHSDILSLKNRCLTMLPDLQPLEKIHGHRSVHSDILSLENQCLTMLSDLQPTERIDGHISVHPDILSLENRCLTMLPDLQPLEKLCGHMSSHPDVLSLENQCLATLPTVKSTALTSPLLQGLHISHTAQADLHSLKTSNCLLPELPTKKTPCFSEELDLPPGPRALKSMSATAQVQEVALGQWCVSKEKEFQEEESTEVPMPLYSLSLEEEEVEAPVLKLTSGDSGFHPETTDQVLQEKKMALLTLLCSALASNVNVKDASDLTRASILEVCSALASLEPEFILKASLYARQQLNLRDIANTVLAVAALLPACRPHVRRYYSAIVHLPSDWIQVAEFYQSLAEGDEKKLVSLPACLRAAMTDKFAEFDEYQLAKYNPRKHRSKRRSRQPPRPQKTERPFSERGKCFPKSLWPLKNEQITFEAAYNAMPEKNRLPRFTLKKLVEYLHIHKPAQHVQALLGYRYPATLELFSRSHLPGPWESSRAGQRMKLRRPETWERELSLRGNKASVWEELIDNGKLPFMAMLRNLCNLLRTGISARHHELVLQRLQHEKSVVHSRQFPFRFLNAHDSIDKLEAQLRSKASPFPSNTTLMKRIMIRNSKKNRRPASRKHLCTLTRRQLRAAMTIPVMYEQLKREKLRLHKARQWNCDVELLERYRQALETAVNLSVKHNLSPMPGRTLLVYLTDANADRLCPKSHSQGPPLNYVLLLIGMMVARAEQVTVCLCGGGFVKTPVLTADEGILKTAIKLQAQVQELEGNDEWPLDTFGKYLLSLAVQRTPIDRVILFGQRMDTELLKVAKQIIWQHVNSKCLFVGVLLQKTQYISPNLNPNDVTLSGCTDGILKFIAEHGASRLLEHVGQLDKLFKIPPPPGKTQAPSLRPLEENIPGPLGPISQHGWRNIRLFISSTFRDMHGERDLLMRSVLPALQARVFPHRISLHAIDLRWGITEEETRRNRQLEVCLGEVENSQLFVGILGSRYGYIPPSYDLPDHPHFHWTHEYPSGRSVTEMEVMQFLNRGQRSQPSAQALIYFRDPDFLSSVPDAWKPDFISESEEAAHRVSELKRYLHEQKEVTCRSYSCEWGGVAAGRPYTGGLEEFGQLVLQDVWSMIQKQHLQPGAQLEQPTSISEDDLIQTSFQQLKTPTSPARPRLLQDTVQQLLLPHGRLSLVTGQAGQGKTAFLASLVSALKVPDQPNEPPFVFFHFAAARPDQCLALNLLRRLCTHLRQKLGELSALPSTYRGLVWELQQKLLLKFAQSLQPAQTLVLIIDGADKLVDRNGQLISDWIPKSLPRRVHLVLSVSSDSGLGETLQQSQGAYVVALGSLVPSSRAQLVREELALYGKRLEESPFNNQMRLLLAKQGSSLPLYLHLVTDYLRLFTLYEQVSERLRTLPATLPLLLQHILSTLEQEHGHDVLPQALTALEVTRSGLTVDQLHAILSTWLILPKETKSWEEVLAASHSGNPFPLCPFAYLVQSLRSLLGEGPVERPGARLCLSDGPLRTTIKRRYGKRLGLEKTAHVLIAAHLWKTCDPDASGTFRSCPPEALKDLPYHLLQSGNHGLLAEFLTNLHVVAAYLEVGLVPDLLEAHVLYASSKPEANQKLPAADVAVFHTFLRQQASLLTQYPLLLLQQAASQPEESPVCCQAPLLTQRWHDQFTLKWINKPQTLKGQQSLSLTMSSSPTAVAFSPNGQRAAVGTASGTIYLLNLKTWQEEKAVVSGCDGISSFAFLSDTALFLTTFDGHLELWDLQHGCWVFQTKAHQYQITGCCLSPDRRLLATVCLGGYLKLWDTVRGQLAFQYTHPKSLNCVAFHPEGQVVATGSWAGSITFFQADGLKVTKELGAPGPSVCSLAFNKPGKIVAVGRIDGTVELWAWQEGARLAAFPAQCGCVSAVLFLHAGDRFLTAGEDGKAQLWSGFLGRPRGCLGSLPLSPALSVALNPDGDQVAVGYREDGINIYKISSGSQGPQHQELNVAVSALVWLSPSVLVSGAEDGSLHGWMFKGDSLHSLWLLSRYQKPVLGLAASRELMAAASEDFTVRLWPRQLLTQPHVHAVELPCCAELRGHEGPVCCCSFSPDGGILATAGRDRNLLCWDMKIAQAPLLIHTFSSCHRDWITGCAWTKDNILVSCSSDGSVGLWNPEAGQQLGQFSGHQSAVSAVVAVEEHIVSVSRDGTLKVWDHQGVELTSIPAHSGPISQCAAALEPRPGGQPGSELLVVTVGLDGATKLWHPLLVCQIRTLQGHSGPVTAAAASEASGLLLTSDDSSVQLWQIPKEADDSYKPRSSVAITAVAWAPDGSMVVSGNEAGELTLWQQAKAVATAQAPGRVSHLIWYSANSFFVLSANENVSEWQVGLRKGSTSTSSSLHLKRVLQEDWGVLTGLGLAPDGQSLILMKEDVELLEMKPGSIPSSICRRYGVHSSILCTSKEYGLFYLQQGDSGLLSILEQKESGEFEEILDFNLNLNNPNGSPVSITQAKPESESSLLCATSDGMLWNLSECTSEGEWIVDNIWQKKAKKPKTQTLETELSPHSELDFSIDCWIDPTNLKAQQCKKIHLGSVTALHVLPGLLVTASKDRDVKLWERPSMQLLGLFRCEGPVSCLEPWMEPSSPLQLAVGDTQGNLYFLSWE</sequence>
<proteinExistence type="evidence at protein level"/>